<dbReference type="EMBL" id="L42023">
    <property type="protein sequence ID" value="AAC21899.1"/>
    <property type="molecule type" value="Genomic_DNA"/>
</dbReference>
<dbReference type="PIR" id="G64145">
    <property type="entry name" value="G64145"/>
</dbReference>
<dbReference type="RefSeq" id="NP_438402.1">
    <property type="nucleotide sequence ID" value="NC_000907.1"/>
</dbReference>
<dbReference type="SMR" id="P44585"/>
<dbReference type="STRING" id="71421.HI_0230"/>
<dbReference type="EnsemblBacteria" id="AAC21899">
    <property type="protein sequence ID" value="AAC21899"/>
    <property type="gene ID" value="HI_0230"/>
</dbReference>
<dbReference type="KEGG" id="hin:HI_0230"/>
<dbReference type="PATRIC" id="fig|71421.8.peg.244"/>
<dbReference type="eggNOG" id="COG4785">
    <property type="taxonomic scope" value="Bacteria"/>
</dbReference>
<dbReference type="HOGENOM" id="CLU_071600_0_0_6"/>
<dbReference type="OrthoDB" id="509324at2"/>
<dbReference type="PhylomeDB" id="P44585"/>
<dbReference type="BioCyc" id="HINF71421:G1GJ1-247-MONOMER"/>
<dbReference type="Proteomes" id="UP000000579">
    <property type="component" value="Chromosome"/>
</dbReference>
<dbReference type="GO" id="GO:0009279">
    <property type="term" value="C:cell outer membrane"/>
    <property type="evidence" value="ECO:0000318"/>
    <property type="project" value="GO_Central"/>
</dbReference>
<dbReference type="GO" id="GO:0005886">
    <property type="term" value="C:plasma membrane"/>
    <property type="evidence" value="ECO:0007669"/>
    <property type="project" value="UniProtKB-SubCell"/>
</dbReference>
<dbReference type="GO" id="GO:0051301">
    <property type="term" value="P:cell division"/>
    <property type="evidence" value="ECO:0007669"/>
    <property type="project" value="UniProtKB-KW"/>
</dbReference>
<dbReference type="GO" id="GO:0046813">
    <property type="term" value="P:receptor-mediated virion attachment to host cell"/>
    <property type="evidence" value="ECO:0000318"/>
    <property type="project" value="GO_Central"/>
</dbReference>
<dbReference type="Gene3D" id="1.25.40.10">
    <property type="entry name" value="Tetratricopeptide repeat domain"/>
    <property type="match status" value="1"/>
</dbReference>
<dbReference type="InterPro" id="IPR023605">
    <property type="entry name" value="Lipoprotein_NlpI"/>
</dbReference>
<dbReference type="InterPro" id="IPR011990">
    <property type="entry name" value="TPR-like_helical_dom_sf"/>
</dbReference>
<dbReference type="InterPro" id="IPR019734">
    <property type="entry name" value="TPR_rpt"/>
</dbReference>
<dbReference type="InterPro" id="IPR050498">
    <property type="entry name" value="Ycf3"/>
</dbReference>
<dbReference type="NCBIfam" id="NF008391">
    <property type="entry name" value="PRK11189.1"/>
    <property type="match status" value="1"/>
</dbReference>
<dbReference type="PANTHER" id="PTHR44858">
    <property type="entry name" value="TETRATRICOPEPTIDE REPEAT PROTEIN 6"/>
    <property type="match status" value="1"/>
</dbReference>
<dbReference type="PANTHER" id="PTHR44858:SF1">
    <property type="entry name" value="UDP-N-ACETYLGLUCOSAMINE--PEPTIDE N-ACETYLGLUCOSAMINYLTRANSFERASE SPINDLY-RELATED"/>
    <property type="match status" value="1"/>
</dbReference>
<dbReference type="PIRSF" id="PIRSF004654">
    <property type="entry name" value="NlpI"/>
    <property type="match status" value="1"/>
</dbReference>
<dbReference type="SMART" id="SM00028">
    <property type="entry name" value="TPR"/>
    <property type="match status" value="3"/>
</dbReference>
<dbReference type="SUPFAM" id="SSF48452">
    <property type="entry name" value="TPR-like"/>
    <property type="match status" value="1"/>
</dbReference>
<dbReference type="PROSITE" id="PS51257">
    <property type="entry name" value="PROKAR_LIPOPROTEIN"/>
    <property type="match status" value="1"/>
</dbReference>
<dbReference type="PROSITE" id="PS50005">
    <property type="entry name" value="TPR"/>
    <property type="match status" value="4"/>
</dbReference>
<dbReference type="PROSITE" id="PS50293">
    <property type="entry name" value="TPR_REGION"/>
    <property type="match status" value="1"/>
</dbReference>
<sequence length="314" mass="36434">MRCFRLSRHFIVYLFSLCAILLLAGCVQSRGGFVSKNHVVLAEQNPNTHFEQEVMIVRLSQVLLVGKMSNEERASLHFERGVLYDSLGLWGLARYDLTQALALQPKMASVYNYLGLYLLLEEDYDGALDAFNTVFELDSGYDYTHLNRGLNFYYVGRYHLAQQDFLQFYQADKKDPYRVLWLYLNEQKLKPQEAQTNLVERAKGLSEDFWGTHIVQYYLGHISVEELQQRASEFAENSQQYAEILTETYFYLAKQKLNVGLVDEAAALFKLAMANQVYNFVEYRFAAFELMKLKPVQTEDEKEEKSAVTKAIVF</sequence>
<keyword id="KW-0131">Cell cycle</keyword>
<keyword id="KW-0132">Cell division</keyword>
<keyword id="KW-1003">Cell membrane</keyword>
<keyword id="KW-0449">Lipoprotein</keyword>
<keyword id="KW-0472">Membrane</keyword>
<keyword id="KW-0564">Palmitate</keyword>
<keyword id="KW-1185">Reference proteome</keyword>
<keyword id="KW-0677">Repeat</keyword>
<keyword id="KW-0732">Signal</keyword>
<keyword id="KW-0802">TPR repeat</keyword>
<reference key="1">
    <citation type="journal article" date="1995" name="Science">
        <title>Whole-genome random sequencing and assembly of Haemophilus influenzae Rd.</title>
        <authorList>
            <person name="Fleischmann R.D."/>
            <person name="Adams M.D."/>
            <person name="White O."/>
            <person name="Clayton R.A."/>
            <person name="Kirkness E.F."/>
            <person name="Kerlavage A.R."/>
            <person name="Bult C.J."/>
            <person name="Tomb J.-F."/>
            <person name="Dougherty B.A."/>
            <person name="Merrick J.M."/>
            <person name="McKenney K."/>
            <person name="Sutton G.G."/>
            <person name="FitzHugh W."/>
            <person name="Fields C.A."/>
            <person name="Gocayne J.D."/>
            <person name="Scott J.D."/>
            <person name="Shirley R."/>
            <person name="Liu L.-I."/>
            <person name="Glodek A."/>
            <person name="Kelley J.M."/>
            <person name="Weidman J.F."/>
            <person name="Phillips C.A."/>
            <person name="Spriggs T."/>
            <person name="Hedblom E."/>
            <person name="Cotton M.D."/>
            <person name="Utterback T.R."/>
            <person name="Hanna M.C."/>
            <person name="Nguyen D.T."/>
            <person name="Saudek D.M."/>
            <person name="Brandon R.C."/>
            <person name="Fine L.D."/>
            <person name="Fritchman J.L."/>
            <person name="Fuhrmann J.L."/>
            <person name="Geoghagen N.S.M."/>
            <person name="Gnehm C.L."/>
            <person name="McDonald L.A."/>
            <person name="Small K.V."/>
            <person name="Fraser C.M."/>
            <person name="Smith H.O."/>
            <person name="Venter J.C."/>
        </authorList>
    </citation>
    <scope>NUCLEOTIDE SEQUENCE [LARGE SCALE GENOMIC DNA]</scope>
    <source>
        <strain>ATCC 51907 / DSM 11121 / KW20 / Rd</strain>
    </source>
</reference>
<reference key="2">
    <citation type="journal article" date="2000" name="Electrophoresis">
        <title>Two-dimensional map of the proteome of Haemophilus influenzae.</title>
        <authorList>
            <person name="Langen H."/>
            <person name="Takacs B."/>
            <person name="Evers S."/>
            <person name="Berndt P."/>
            <person name="Lahm H.W."/>
            <person name="Wipf B."/>
            <person name="Gray C."/>
            <person name="Fountoulakis M."/>
        </authorList>
    </citation>
    <scope>IDENTIFICATION BY MASS SPECTROMETRY</scope>
    <source>
        <strain>ATCC 51907 / DSM 11121 / KW20 / Rd</strain>
    </source>
</reference>
<comment type="function">
    <text evidence="1">May be involved in cell division.</text>
</comment>
<comment type="subunit">
    <text evidence="1">Homodimer.</text>
</comment>
<comment type="subcellular location">
    <subcellularLocation>
        <location evidence="2">Cell membrane</location>
        <topology evidence="2">Lipid-anchor</topology>
    </subcellularLocation>
</comment>
<gene>
    <name type="primary">nlpI</name>
    <name type="ordered locus">HI_0230</name>
</gene>
<protein>
    <recommendedName>
        <fullName>Lipoprotein NlpI homolog</fullName>
    </recommendedName>
</protein>
<accession>P44585</accession>
<proteinExistence type="evidence at protein level"/>
<organism>
    <name type="scientific">Haemophilus influenzae (strain ATCC 51907 / DSM 11121 / KW20 / Rd)</name>
    <dbReference type="NCBI Taxonomy" id="71421"/>
    <lineage>
        <taxon>Bacteria</taxon>
        <taxon>Pseudomonadati</taxon>
        <taxon>Pseudomonadota</taxon>
        <taxon>Gammaproteobacteria</taxon>
        <taxon>Pasteurellales</taxon>
        <taxon>Pasteurellaceae</taxon>
        <taxon>Haemophilus</taxon>
    </lineage>
</organism>
<name>NLPI_HAEIN</name>
<evidence type="ECO:0000250" key="1"/>
<evidence type="ECO:0000255" key="2">
    <source>
        <dbReference type="PROSITE-ProRule" id="PRU00303"/>
    </source>
</evidence>
<feature type="signal peptide" evidence="2">
    <location>
        <begin position="1"/>
        <end position="25"/>
    </location>
</feature>
<feature type="chain" id="PRO_0000035693" description="Lipoprotein NlpI homolog">
    <location>
        <begin position="26"/>
        <end position="314"/>
    </location>
</feature>
<feature type="repeat" description="TPR 1">
    <location>
        <begin position="74"/>
        <end position="107"/>
    </location>
</feature>
<feature type="repeat" description="TPR 2">
    <location>
        <begin position="108"/>
        <end position="141"/>
    </location>
</feature>
<feature type="repeat" description="TPR 3">
    <location>
        <begin position="246"/>
        <end position="279"/>
    </location>
</feature>
<feature type="lipid moiety-binding region" description="N-palmitoyl cysteine" evidence="2">
    <location>
        <position position="26"/>
    </location>
</feature>
<feature type="lipid moiety-binding region" description="S-diacylglycerol cysteine" evidence="2">
    <location>
        <position position="26"/>
    </location>
</feature>